<protein>
    <recommendedName>
        <fullName evidence="1">NADPH-dependent 7-cyano-7-deazaguanine reductase</fullName>
        <ecNumber evidence="1">1.7.1.13</ecNumber>
    </recommendedName>
    <alternativeName>
        <fullName evidence="1">7-cyano-7-carbaguanine reductase</fullName>
    </alternativeName>
    <alternativeName>
        <fullName evidence="1">NADPH-dependent nitrile oxidoreductase</fullName>
    </alternativeName>
    <alternativeName>
        <fullName evidence="1">PreQ(0) reductase</fullName>
    </alternativeName>
</protein>
<keyword id="KW-0963">Cytoplasm</keyword>
<keyword id="KW-0521">NADP</keyword>
<keyword id="KW-0560">Oxidoreductase</keyword>
<keyword id="KW-0671">Queuosine biosynthesis</keyword>
<sequence>MTQNHDPYSDAQALVGLTLGKATDYQAEYDASLLQGVPRSLNRNAIALTGTLPFHGADIWTGYELSWLNAKGKPMVAIAEFHLSYESLNLIESKSFKLYLNSFNQTKFDSIDSLQKTLVADLSQCAQGDISVKIIEPKSFGIQRIIELPGTCIDDLDIEVSDYSFNPDYLENSTDDKQTVAETLNSNLLKSNCLITSQPDWGSVMIRYQGPKIDREKLLRYLISFRQHNEFHEQCVERIFVDLKRFCHCTKLTVYARYTRRGGLDINPYRSDFEQPGESHRLARQ</sequence>
<gene>
    <name evidence="1" type="primary">queF</name>
    <name type="ordered locus">Sbal223_2923</name>
</gene>
<comment type="function">
    <text evidence="1">Catalyzes the NADPH-dependent reduction of 7-cyano-7-deazaguanine (preQ0) to 7-aminomethyl-7-deazaguanine (preQ1).</text>
</comment>
<comment type="catalytic activity">
    <reaction evidence="1">
        <text>7-aminomethyl-7-carbaguanine + 2 NADP(+) = 7-cyano-7-deazaguanine + 2 NADPH + 3 H(+)</text>
        <dbReference type="Rhea" id="RHEA:13409"/>
        <dbReference type="ChEBI" id="CHEBI:15378"/>
        <dbReference type="ChEBI" id="CHEBI:45075"/>
        <dbReference type="ChEBI" id="CHEBI:57783"/>
        <dbReference type="ChEBI" id="CHEBI:58349"/>
        <dbReference type="ChEBI" id="CHEBI:58703"/>
        <dbReference type="EC" id="1.7.1.13"/>
    </reaction>
</comment>
<comment type="pathway">
    <text evidence="1">tRNA modification; tRNA-queuosine biosynthesis.</text>
</comment>
<comment type="subunit">
    <text evidence="1">Homodimer.</text>
</comment>
<comment type="subcellular location">
    <subcellularLocation>
        <location evidence="1">Cytoplasm</location>
    </subcellularLocation>
</comment>
<comment type="similarity">
    <text evidence="1">Belongs to the GTP cyclohydrolase I family. QueF type 2 subfamily.</text>
</comment>
<dbReference type="EC" id="1.7.1.13" evidence="1"/>
<dbReference type="EMBL" id="CP001252">
    <property type="protein sequence ID" value="ACK47409.1"/>
    <property type="molecule type" value="Genomic_DNA"/>
</dbReference>
<dbReference type="RefSeq" id="WP_006080957.1">
    <property type="nucleotide sequence ID" value="NC_011663.1"/>
</dbReference>
<dbReference type="SMR" id="B8E7T7"/>
<dbReference type="GeneID" id="11771711"/>
<dbReference type="KEGG" id="sbp:Sbal223_2923"/>
<dbReference type="HOGENOM" id="CLU_054738_0_0_6"/>
<dbReference type="UniPathway" id="UPA00392"/>
<dbReference type="Proteomes" id="UP000002507">
    <property type="component" value="Chromosome"/>
</dbReference>
<dbReference type="GO" id="GO:0005737">
    <property type="term" value="C:cytoplasm"/>
    <property type="evidence" value="ECO:0007669"/>
    <property type="project" value="UniProtKB-SubCell"/>
</dbReference>
<dbReference type="GO" id="GO:0033739">
    <property type="term" value="F:preQ1 synthase activity"/>
    <property type="evidence" value="ECO:0007669"/>
    <property type="project" value="UniProtKB-UniRule"/>
</dbReference>
<dbReference type="GO" id="GO:0008616">
    <property type="term" value="P:queuosine biosynthetic process"/>
    <property type="evidence" value="ECO:0007669"/>
    <property type="project" value="UniProtKB-UniRule"/>
</dbReference>
<dbReference type="GO" id="GO:0006400">
    <property type="term" value="P:tRNA modification"/>
    <property type="evidence" value="ECO:0007669"/>
    <property type="project" value="UniProtKB-UniRule"/>
</dbReference>
<dbReference type="Gene3D" id="3.30.1130.10">
    <property type="match status" value="2"/>
</dbReference>
<dbReference type="HAMAP" id="MF_00817">
    <property type="entry name" value="QueF_type2"/>
    <property type="match status" value="1"/>
</dbReference>
<dbReference type="InterPro" id="IPR043133">
    <property type="entry name" value="GTP-CH-I_C/QueF"/>
</dbReference>
<dbReference type="InterPro" id="IPR050084">
    <property type="entry name" value="NADPH_dep_7-cyano-7-deazaG_red"/>
</dbReference>
<dbReference type="InterPro" id="IPR029500">
    <property type="entry name" value="QueF"/>
</dbReference>
<dbReference type="InterPro" id="IPR029139">
    <property type="entry name" value="QueF_N"/>
</dbReference>
<dbReference type="InterPro" id="IPR016428">
    <property type="entry name" value="QueF_type2"/>
</dbReference>
<dbReference type="NCBIfam" id="TIGR03138">
    <property type="entry name" value="QueF"/>
    <property type="match status" value="1"/>
</dbReference>
<dbReference type="PANTHER" id="PTHR34354">
    <property type="entry name" value="NADPH-DEPENDENT 7-CYANO-7-DEAZAGUANINE REDUCTASE"/>
    <property type="match status" value="1"/>
</dbReference>
<dbReference type="PANTHER" id="PTHR34354:SF1">
    <property type="entry name" value="NADPH-DEPENDENT 7-CYANO-7-DEAZAGUANINE REDUCTASE"/>
    <property type="match status" value="1"/>
</dbReference>
<dbReference type="Pfam" id="PF14489">
    <property type="entry name" value="QueF"/>
    <property type="match status" value="1"/>
</dbReference>
<dbReference type="Pfam" id="PF14819">
    <property type="entry name" value="QueF_N"/>
    <property type="match status" value="1"/>
</dbReference>
<dbReference type="PIRSF" id="PIRSF004750">
    <property type="entry name" value="Nitrile_oxidored_YqcD_prd"/>
    <property type="match status" value="1"/>
</dbReference>
<dbReference type="SUPFAM" id="SSF55620">
    <property type="entry name" value="Tetrahydrobiopterin biosynthesis enzymes-like"/>
    <property type="match status" value="1"/>
</dbReference>
<evidence type="ECO:0000255" key="1">
    <source>
        <dbReference type="HAMAP-Rule" id="MF_00817"/>
    </source>
</evidence>
<reference key="1">
    <citation type="submission" date="2008-12" db="EMBL/GenBank/DDBJ databases">
        <title>Complete sequence of chromosome of Shewanella baltica OS223.</title>
        <authorList>
            <consortium name="US DOE Joint Genome Institute"/>
            <person name="Lucas S."/>
            <person name="Copeland A."/>
            <person name="Lapidus A."/>
            <person name="Glavina del Rio T."/>
            <person name="Dalin E."/>
            <person name="Tice H."/>
            <person name="Bruce D."/>
            <person name="Goodwin L."/>
            <person name="Pitluck S."/>
            <person name="Chertkov O."/>
            <person name="Meincke L."/>
            <person name="Brettin T."/>
            <person name="Detter J.C."/>
            <person name="Han C."/>
            <person name="Kuske C.R."/>
            <person name="Larimer F."/>
            <person name="Land M."/>
            <person name="Hauser L."/>
            <person name="Kyrpides N."/>
            <person name="Ovchinnikova G."/>
            <person name="Brettar I."/>
            <person name="Rodrigues J."/>
            <person name="Konstantinidis K."/>
            <person name="Tiedje J."/>
        </authorList>
    </citation>
    <scope>NUCLEOTIDE SEQUENCE [LARGE SCALE GENOMIC DNA]</scope>
    <source>
        <strain>OS223</strain>
    </source>
</reference>
<proteinExistence type="inferred from homology"/>
<accession>B8E7T7</accession>
<name>QUEF_SHEB2</name>
<feature type="chain" id="PRO_1000148657" description="NADPH-dependent 7-cyano-7-deazaguanine reductase">
    <location>
        <begin position="1"/>
        <end position="285"/>
    </location>
</feature>
<feature type="active site" description="Thioimide intermediate" evidence="1">
    <location>
        <position position="193"/>
    </location>
</feature>
<feature type="active site" description="Proton donor" evidence="1">
    <location>
        <position position="200"/>
    </location>
</feature>
<feature type="binding site" evidence="1">
    <location>
        <begin position="91"/>
        <end position="93"/>
    </location>
    <ligand>
        <name>substrate</name>
    </ligand>
</feature>
<feature type="binding site" evidence="1">
    <location>
        <begin position="93"/>
        <end position="94"/>
    </location>
    <ligand>
        <name>NADPH</name>
        <dbReference type="ChEBI" id="CHEBI:57783"/>
    </ligand>
</feature>
<feature type="binding site" evidence="1">
    <location>
        <begin position="232"/>
        <end position="233"/>
    </location>
    <ligand>
        <name>substrate</name>
    </ligand>
</feature>
<feature type="binding site" evidence="1">
    <location>
        <begin position="261"/>
        <end position="262"/>
    </location>
    <ligand>
        <name>NADPH</name>
        <dbReference type="ChEBI" id="CHEBI:57783"/>
    </ligand>
</feature>
<organism>
    <name type="scientific">Shewanella baltica (strain OS223)</name>
    <dbReference type="NCBI Taxonomy" id="407976"/>
    <lineage>
        <taxon>Bacteria</taxon>
        <taxon>Pseudomonadati</taxon>
        <taxon>Pseudomonadota</taxon>
        <taxon>Gammaproteobacteria</taxon>
        <taxon>Alteromonadales</taxon>
        <taxon>Shewanellaceae</taxon>
        <taxon>Shewanella</taxon>
    </lineage>
</organism>